<sequence length="63" mass="6971">MADKKLKVTLKRGLIGVSDGKIRTIKALGLKKRSHSVIKNDTPEIRGMIDKVSNLVEVEELEA</sequence>
<organism>
    <name type="scientific">Natranaerobius thermophilus (strain ATCC BAA-1301 / DSM 18059 / JW/NM-WN-LF)</name>
    <dbReference type="NCBI Taxonomy" id="457570"/>
    <lineage>
        <taxon>Bacteria</taxon>
        <taxon>Bacillati</taxon>
        <taxon>Bacillota</taxon>
        <taxon>Clostridia</taxon>
        <taxon>Natranaerobiales</taxon>
        <taxon>Natranaerobiaceae</taxon>
        <taxon>Natranaerobius</taxon>
    </lineage>
</organism>
<keyword id="KW-1185">Reference proteome</keyword>
<keyword id="KW-0687">Ribonucleoprotein</keyword>
<keyword id="KW-0689">Ribosomal protein</keyword>
<dbReference type="EMBL" id="CP001034">
    <property type="protein sequence ID" value="ACB83811.1"/>
    <property type="molecule type" value="Genomic_DNA"/>
</dbReference>
<dbReference type="RefSeq" id="WP_012446700.1">
    <property type="nucleotide sequence ID" value="NC_010718.1"/>
</dbReference>
<dbReference type="SMR" id="B2A4F7"/>
<dbReference type="FunCoup" id="B2A4F7">
    <property type="interactions" value="284"/>
</dbReference>
<dbReference type="STRING" id="457570.Nther_0212"/>
<dbReference type="KEGG" id="nth:Nther_0212"/>
<dbReference type="eggNOG" id="COG1841">
    <property type="taxonomic scope" value="Bacteria"/>
</dbReference>
<dbReference type="HOGENOM" id="CLU_131047_2_1_9"/>
<dbReference type="InParanoid" id="B2A4F7"/>
<dbReference type="OrthoDB" id="9812790at2"/>
<dbReference type="Proteomes" id="UP000001683">
    <property type="component" value="Chromosome"/>
</dbReference>
<dbReference type="GO" id="GO:0022625">
    <property type="term" value="C:cytosolic large ribosomal subunit"/>
    <property type="evidence" value="ECO:0007669"/>
    <property type="project" value="TreeGrafter"/>
</dbReference>
<dbReference type="GO" id="GO:0003735">
    <property type="term" value="F:structural constituent of ribosome"/>
    <property type="evidence" value="ECO:0007669"/>
    <property type="project" value="InterPro"/>
</dbReference>
<dbReference type="GO" id="GO:0006412">
    <property type="term" value="P:translation"/>
    <property type="evidence" value="ECO:0007669"/>
    <property type="project" value="UniProtKB-UniRule"/>
</dbReference>
<dbReference type="CDD" id="cd01658">
    <property type="entry name" value="Ribosomal_L30"/>
    <property type="match status" value="1"/>
</dbReference>
<dbReference type="Gene3D" id="3.30.1390.20">
    <property type="entry name" value="Ribosomal protein L30, ferredoxin-like fold domain"/>
    <property type="match status" value="1"/>
</dbReference>
<dbReference type="HAMAP" id="MF_01371_B">
    <property type="entry name" value="Ribosomal_uL30_B"/>
    <property type="match status" value="1"/>
</dbReference>
<dbReference type="InterPro" id="IPR036919">
    <property type="entry name" value="Ribo_uL30_ferredoxin-like_sf"/>
</dbReference>
<dbReference type="InterPro" id="IPR005996">
    <property type="entry name" value="Ribosomal_uL30_bac-type"/>
</dbReference>
<dbReference type="InterPro" id="IPR018038">
    <property type="entry name" value="Ribosomal_uL30_CS"/>
</dbReference>
<dbReference type="InterPro" id="IPR016082">
    <property type="entry name" value="Ribosomal_uL30_ferredoxin-like"/>
</dbReference>
<dbReference type="NCBIfam" id="TIGR01308">
    <property type="entry name" value="rpmD_bact"/>
    <property type="match status" value="1"/>
</dbReference>
<dbReference type="PANTHER" id="PTHR15892:SF2">
    <property type="entry name" value="LARGE RIBOSOMAL SUBUNIT PROTEIN UL30M"/>
    <property type="match status" value="1"/>
</dbReference>
<dbReference type="PANTHER" id="PTHR15892">
    <property type="entry name" value="MITOCHONDRIAL RIBOSOMAL PROTEIN L30"/>
    <property type="match status" value="1"/>
</dbReference>
<dbReference type="Pfam" id="PF00327">
    <property type="entry name" value="Ribosomal_L30"/>
    <property type="match status" value="1"/>
</dbReference>
<dbReference type="PIRSF" id="PIRSF002211">
    <property type="entry name" value="Ribosomal_L30_bac-type"/>
    <property type="match status" value="1"/>
</dbReference>
<dbReference type="SUPFAM" id="SSF55129">
    <property type="entry name" value="Ribosomal protein L30p/L7e"/>
    <property type="match status" value="1"/>
</dbReference>
<dbReference type="PROSITE" id="PS00634">
    <property type="entry name" value="RIBOSOMAL_L30"/>
    <property type="match status" value="1"/>
</dbReference>
<feature type="chain" id="PRO_0000347125" description="Large ribosomal subunit protein uL30">
    <location>
        <begin position="1"/>
        <end position="63"/>
    </location>
</feature>
<proteinExistence type="inferred from homology"/>
<comment type="subunit">
    <text evidence="1">Part of the 50S ribosomal subunit.</text>
</comment>
<comment type="similarity">
    <text evidence="1">Belongs to the universal ribosomal protein uL30 family.</text>
</comment>
<name>RL30_NATTJ</name>
<gene>
    <name evidence="1" type="primary">rpmD</name>
    <name type="ordered locus">Nther_0212</name>
</gene>
<protein>
    <recommendedName>
        <fullName evidence="1">Large ribosomal subunit protein uL30</fullName>
    </recommendedName>
    <alternativeName>
        <fullName evidence="2">50S ribosomal protein L30</fullName>
    </alternativeName>
</protein>
<evidence type="ECO:0000255" key="1">
    <source>
        <dbReference type="HAMAP-Rule" id="MF_01371"/>
    </source>
</evidence>
<evidence type="ECO:0000305" key="2"/>
<accession>B2A4F7</accession>
<reference key="1">
    <citation type="submission" date="2008-04" db="EMBL/GenBank/DDBJ databases">
        <title>Complete sequence of chromosome of Natranaerobius thermophilus JW/NM-WN-LF.</title>
        <authorList>
            <consortium name="US DOE Joint Genome Institute"/>
            <person name="Copeland A."/>
            <person name="Lucas S."/>
            <person name="Lapidus A."/>
            <person name="Glavina del Rio T."/>
            <person name="Dalin E."/>
            <person name="Tice H."/>
            <person name="Bruce D."/>
            <person name="Goodwin L."/>
            <person name="Pitluck S."/>
            <person name="Chertkov O."/>
            <person name="Brettin T."/>
            <person name="Detter J.C."/>
            <person name="Han C."/>
            <person name="Kuske C.R."/>
            <person name="Schmutz J."/>
            <person name="Larimer F."/>
            <person name="Land M."/>
            <person name="Hauser L."/>
            <person name="Kyrpides N."/>
            <person name="Lykidis A."/>
            <person name="Mesbah N.M."/>
            <person name="Wiegel J."/>
        </authorList>
    </citation>
    <scope>NUCLEOTIDE SEQUENCE [LARGE SCALE GENOMIC DNA]</scope>
    <source>
        <strain>ATCC BAA-1301 / DSM 18059 / JW/NM-WN-LF</strain>
    </source>
</reference>